<gene>
    <name evidence="1" type="primary">ligB</name>
    <name type="ordered locus">PSPTO_0382</name>
</gene>
<reference key="1">
    <citation type="journal article" date="2003" name="Proc. Natl. Acad. Sci. U.S.A.">
        <title>The complete genome sequence of the Arabidopsis and tomato pathogen Pseudomonas syringae pv. tomato DC3000.</title>
        <authorList>
            <person name="Buell C.R."/>
            <person name="Joardar V."/>
            <person name="Lindeberg M."/>
            <person name="Selengut J."/>
            <person name="Paulsen I.T."/>
            <person name="Gwinn M.L."/>
            <person name="Dodson R.J."/>
            <person name="DeBoy R.T."/>
            <person name="Durkin A.S."/>
            <person name="Kolonay J.F."/>
            <person name="Madupu R."/>
            <person name="Daugherty S.C."/>
            <person name="Brinkac L.M."/>
            <person name="Beanan M.J."/>
            <person name="Haft D.H."/>
            <person name="Nelson W.C."/>
            <person name="Davidsen T.M."/>
            <person name="Zafar N."/>
            <person name="Zhou L."/>
            <person name="Liu J."/>
            <person name="Yuan Q."/>
            <person name="Khouri H.M."/>
            <person name="Fedorova N.B."/>
            <person name="Tran B."/>
            <person name="Russell D."/>
            <person name="Berry K.J."/>
            <person name="Utterback T.R."/>
            <person name="Van Aken S.E."/>
            <person name="Feldblyum T.V."/>
            <person name="D'Ascenzo M."/>
            <person name="Deng W.-L."/>
            <person name="Ramos A.R."/>
            <person name="Alfano J.R."/>
            <person name="Cartinhour S."/>
            <person name="Chatterjee A.K."/>
            <person name="Delaney T.P."/>
            <person name="Lazarowitz S.G."/>
            <person name="Martin G.B."/>
            <person name="Schneider D.J."/>
            <person name="Tang X."/>
            <person name="Bender C.L."/>
            <person name="White O."/>
            <person name="Fraser C.M."/>
            <person name="Collmer A."/>
        </authorList>
    </citation>
    <scope>NUCLEOTIDE SEQUENCE [LARGE SCALE GENOMIC DNA]</scope>
    <source>
        <strain>ATCC BAA-871 / DC3000</strain>
    </source>
</reference>
<sequence length="561" mass="62020">MLPALRLMTCALLTFFTTLSHASQCPDWSHARASSEITALQQQIASWDDSYHRQGLSQIPDELYDQSRQKLNDWRSCFAVSTPQANPLKTATGPLAHPVPHTGVNKLADEKDVKAWLKGRTDLWIQPKVDGVAVTLVYDEGRLVQAISRGDGTQGQDWTPQARLIKAIPQQLPQPDSLILQGELYWRLTDHVQAASGSVNARSKVAGMLARQTISPQQADAIGLFVWDWPDGPADMAQRLAGLQAMGFNHSVAYTHPLENHAQAADWREHWYRNPLPFATDGVIMRQGQRPPAQRWQASAPYWIAAWKHPYAQALAEVRKVHFNIGRTGKIAPVLELTPVRLDDRTVSRISAGSLSRWEKLDIRPGDHIAVSLAGLTIPRLDGVVSRAAERAEMSVPHASDYHESSCWQAAPGCESQFRARLVWLSGKKGLALPGVGPGTWDKLIESGHISGLLDWMTLNHAELANIPGLAERSSDKLLDSLQTARERPFQTWLKAIGLPPAGNAKLPDNWHDLAERSVEQWQAEPGIGPGRAAKLRAFFQDPHVQALSQQLQAQGISGFK</sequence>
<protein>
    <recommendedName>
        <fullName evidence="1">DNA ligase B</fullName>
        <ecNumber evidence="1">6.5.1.2</ecNumber>
    </recommendedName>
    <alternativeName>
        <fullName evidence="1">Polydeoxyribonucleotide synthase [NAD(+)] B</fullName>
    </alternativeName>
</protein>
<keyword id="KW-0227">DNA damage</keyword>
<keyword id="KW-0234">DNA repair</keyword>
<keyword id="KW-0235">DNA replication</keyword>
<keyword id="KW-0436">Ligase</keyword>
<keyword id="KW-0520">NAD</keyword>
<keyword id="KW-1185">Reference proteome</keyword>
<accession>Q88AK8</accession>
<feature type="chain" id="PRO_0000313550" description="DNA ligase B">
    <location>
        <begin position="1"/>
        <end position="561"/>
    </location>
</feature>
<feature type="active site" description="N6-AMP-lysine intermediate" evidence="1">
    <location>
        <position position="128"/>
    </location>
</feature>
<dbReference type="EC" id="6.5.1.2" evidence="1"/>
<dbReference type="EMBL" id="AE016853">
    <property type="protein sequence ID" value="AAO53926.1"/>
    <property type="molecule type" value="Genomic_DNA"/>
</dbReference>
<dbReference type="RefSeq" id="NP_790231.1">
    <property type="nucleotide sequence ID" value="NC_004578.1"/>
</dbReference>
<dbReference type="RefSeq" id="WP_011103125.1">
    <property type="nucleotide sequence ID" value="NC_004578.1"/>
</dbReference>
<dbReference type="SMR" id="Q88AK8"/>
<dbReference type="STRING" id="223283.PSPTO_0382"/>
<dbReference type="GeneID" id="1181991"/>
<dbReference type="KEGG" id="pst:PSPTO_0382"/>
<dbReference type="PATRIC" id="fig|223283.9.peg.399"/>
<dbReference type="eggNOG" id="COG0272">
    <property type="taxonomic scope" value="Bacteria"/>
</dbReference>
<dbReference type="HOGENOM" id="CLU_489786_0_0_6"/>
<dbReference type="OrthoDB" id="9759736at2"/>
<dbReference type="PhylomeDB" id="Q88AK8"/>
<dbReference type="Proteomes" id="UP000002515">
    <property type="component" value="Chromosome"/>
</dbReference>
<dbReference type="GO" id="GO:0003911">
    <property type="term" value="F:DNA ligase (NAD+) activity"/>
    <property type="evidence" value="ECO:0007669"/>
    <property type="project" value="UniProtKB-UniRule"/>
</dbReference>
<dbReference type="GO" id="GO:0006281">
    <property type="term" value="P:DNA repair"/>
    <property type="evidence" value="ECO:0007669"/>
    <property type="project" value="UniProtKB-KW"/>
</dbReference>
<dbReference type="GO" id="GO:0006260">
    <property type="term" value="P:DNA replication"/>
    <property type="evidence" value="ECO:0007669"/>
    <property type="project" value="UniProtKB-KW"/>
</dbReference>
<dbReference type="FunFam" id="3.30.470.30:FF:000007">
    <property type="entry name" value="DNA ligase B"/>
    <property type="match status" value="1"/>
</dbReference>
<dbReference type="Gene3D" id="1.10.150.20">
    <property type="entry name" value="5' to 3' exonuclease, C-terminal subdomain"/>
    <property type="match status" value="2"/>
</dbReference>
<dbReference type="Gene3D" id="3.30.470.30">
    <property type="entry name" value="DNA ligase/mRNA capping enzyme"/>
    <property type="match status" value="1"/>
</dbReference>
<dbReference type="Gene3D" id="1.10.287.610">
    <property type="entry name" value="Helix hairpin bin"/>
    <property type="match status" value="1"/>
</dbReference>
<dbReference type="Gene3D" id="2.40.50.140">
    <property type="entry name" value="Nucleic acid-binding proteins"/>
    <property type="match status" value="1"/>
</dbReference>
<dbReference type="HAMAP" id="MF_01587">
    <property type="entry name" value="DNA_ligase_B"/>
    <property type="match status" value="1"/>
</dbReference>
<dbReference type="InterPro" id="IPR001679">
    <property type="entry name" value="DNA_ligase"/>
</dbReference>
<dbReference type="InterPro" id="IPR020923">
    <property type="entry name" value="DNA_ligase_B"/>
</dbReference>
<dbReference type="InterPro" id="IPR013839">
    <property type="entry name" value="DNAligase_adenylation"/>
</dbReference>
<dbReference type="InterPro" id="IPR013840">
    <property type="entry name" value="DNAligase_N"/>
</dbReference>
<dbReference type="InterPro" id="IPR012340">
    <property type="entry name" value="NA-bd_OB-fold"/>
</dbReference>
<dbReference type="InterPro" id="IPR050326">
    <property type="entry name" value="NAD_dep_DNA_ligaseB"/>
</dbReference>
<dbReference type="InterPro" id="IPR004150">
    <property type="entry name" value="NAD_DNA_ligase_OB"/>
</dbReference>
<dbReference type="InterPro" id="IPR010994">
    <property type="entry name" value="RuvA_2-like"/>
</dbReference>
<dbReference type="NCBIfam" id="NF005987">
    <property type="entry name" value="PRK08097.1"/>
    <property type="match status" value="1"/>
</dbReference>
<dbReference type="PANTHER" id="PTHR47810">
    <property type="entry name" value="DNA LIGASE"/>
    <property type="match status" value="1"/>
</dbReference>
<dbReference type="PANTHER" id="PTHR47810:SF1">
    <property type="entry name" value="DNA LIGASE B"/>
    <property type="match status" value="1"/>
</dbReference>
<dbReference type="Pfam" id="PF01653">
    <property type="entry name" value="DNA_ligase_aden"/>
    <property type="match status" value="1"/>
</dbReference>
<dbReference type="Pfam" id="PF03120">
    <property type="entry name" value="DNA_ligase_OB"/>
    <property type="match status" value="1"/>
</dbReference>
<dbReference type="PIRSF" id="PIRSF001604">
    <property type="entry name" value="LigA"/>
    <property type="match status" value="1"/>
</dbReference>
<dbReference type="SMART" id="SM00532">
    <property type="entry name" value="LIGANc"/>
    <property type="match status" value="1"/>
</dbReference>
<dbReference type="SUPFAM" id="SSF56091">
    <property type="entry name" value="DNA ligase/mRNA capping enzyme, catalytic domain"/>
    <property type="match status" value="1"/>
</dbReference>
<dbReference type="SUPFAM" id="SSF50249">
    <property type="entry name" value="Nucleic acid-binding proteins"/>
    <property type="match status" value="1"/>
</dbReference>
<dbReference type="SUPFAM" id="SSF47781">
    <property type="entry name" value="RuvA domain 2-like"/>
    <property type="match status" value="1"/>
</dbReference>
<comment type="function">
    <text evidence="1">Catalyzes the formation of phosphodiester linkages between 5'-phosphoryl and 3'-hydroxyl groups in double-stranded DNA using NAD as a coenzyme and as the energy source for the reaction.</text>
</comment>
<comment type="catalytic activity">
    <reaction evidence="1">
        <text>NAD(+) + (deoxyribonucleotide)n-3'-hydroxyl + 5'-phospho-(deoxyribonucleotide)m = (deoxyribonucleotide)n+m + AMP + beta-nicotinamide D-nucleotide.</text>
        <dbReference type="EC" id="6.5.1.2"/>
    </reaction>
</comment>
<comment type="similarity">
    <text evidence="1">Belongs to the NAD-dependent DNA ligase family. LigB subfamily.</text>
</comment>
<organism>
    <name type="scientific">Pseudomonas syringae pv. tomato (strain ATCC BAA-871 / DC3000)</name>
    <dbReference type="NCBI Taxonomy" id="223283"/>
    <lineage>
        <taxon>Bacteria</taxon>
        <taxon>Pseudomonadati</taxon>
        <taxon>Pseudomonadota</taxon>
        <taxon>Gammaproteobacteria</taxon>
        <taxon>Pseudomonadales</taxon>
        <taxon>Pseudomonadaceae</taxon>
        <taxon>Pseudomonas</taxon>
    </lineage>
</organism>
<evidence type="ECO:0000255" key="1">
    <source>
        <dbReference type="HAMAP-Rule" id="MF_01587"/>
    </source>
</evidence>
<proteinExistence type="inferred from homology"/>
<name>LIGB_PSESM</name>